<organism>
    <name type="scientific">Pinus contorta</name>
    <name type="common">Shore pine</name>
    <name type="synonym">Lodgepole pine</name>
    <dbReference type="NCBI Taxonomy" id="3339"/>
    <lineage>
        <taxon>Eukaryota</taxon>
        <taxon>Viridiplantae</taxon>
        <taxon>Streptophyta</taxon>
        <taxon>Embryophyta</taxon>
        <taxon>Tracheophyta</taxon>
        <taxon>Spermatophyta</taxon>
        <taxon>Pinopsida</taxon>
        <taxon>Pinidae</taxon>
        <taxon>Conifers I</taxon>
        <taxon>Pinales</taxon>
        <taxon>Pinaceae</taxon>
        <taxon>Pinus</taxon>
        <taxon>Pinus subgen. Pinus</taxon>
    </lineage>
</organism>
<accession>P49168</accession>
<comment type="function">
    <text evidence="1">With S4 and S5 plays an important role in translational accuracy. Located at the interface of the 30S and 50S subunits (By similarity).</text>
</comment>
<comment type="subunit">
    <text evidence="1">Part of the 30S ribosomal subunit.</text>
</comment>
<comment type="subcellular location">
    <subcellularLocation>
        <location>Plastid</location>
        <location>Chloroplast</location>
    </subcellularLocation>
</comment>
<comment type="similarity">
    <text evidence="3">Belongs to the universal ribosomal protein uS12 family.</text>
</comment>
<dbReference type="EMBL" id="L28807">
    <property type="protein sequence ID" value="AAA68095.1"/>
    <property type="molecule type" value="Genomic_DNA"/>
</dbReference>
<dbReference type="PIR" id="S50764">
    <property type="entry name" value="S50764"/>
</dbReference>
<dbReference type="SMR" id="P49168"/>
<dbReference type="GO" id="GO:0009507">
    <property type="term" value="C:chloroplast"/>
    <property type="evidence" value="ECO:0007669"/>
    <property type="project" value="UniProtKB-SubCell"/>
</dbReference>
<dbReference type="GO" id="GO:1990904">
    <property type="term" value="C:ribonucleoprotein complex"/>
    <property type="evidence" value="ECO:0007669"/>
    <property type="project" value="UniProtKB-KW"/>
</dbReference>
<dbReference type="GO" id="GO:0005840">
    <property type="term" value="C:ribosome"/>
    <property type="evidence" value="ECO:0007669"/>
    <property type="project" value="UniProtKB-KW"/>
</dbReference>
<dbReference type="GO" id="GO:0019843">
    <property type="term" value="F:rRNA binding"/>
    <property type="evidence" value="ECO:0007669"/>
    <property type="project" value="UniProtKB-KW"/>
</dbReference>
<dbReference type="Gene3D" id="2.40.50.140">
    <property type="entry name" value="Nucleic acid-binding proteins"/>
    <property type="match status" value="1"/>
</dbReference>
<dbReference type="InterPro" id="IPR012340">
    <property type="entry name" value="NA-bd_OB-fold"/>
</dbReference>
<dbReference type="SUPFAM" id="SSF50249">
    <property type="entry name" value="Nucleic acid-binding proteins"/>
    <property type="match status" value="1"/>
</dbReference>
<reference key="1">
    <citation type="journal article" date="1994" name="Plant Mol. Biol.">
        <title>Identification and expression of the chloroplast clpP gene in the conifer Pinus contorta.</title>
        <authorList>
            <person name="Clarke A.K."/>
            <person name="Gustafsson P."/>
            <person name="Lidholm J.A."/>
        </authorList>
    </citation>
    <scope>NUCLEOTIDE SEQUENCE [GENOMIC DNA]</scope>
    <source>
        <tissue>Needle</tissue>
    </source>
</reference>
<name>RR12_PINCO</name>
<evidence type="ECO:0000250" key="1"/>
<evidence type="ECO:0000256" key="2">
    <source>
        <dbReference type="SAM" id="MobiDB-lite"/>
    </source>
</evidence>
<evidence type="ECO:0000305" key="3"/>
<geneLocation type="chloroplast"/>
<protein>
    <recommendedName>
        <fullName evidence="3">Small ribosomal subunit protein uS12c</fullName>
    </recommendedName>
    <alternativeName>
        <fullName>30S ribosomal protein S12, chloroplastic</fullName>
    </alternativeName>
</protein>
<feature type="chain" id="PRO_0000146418" description="Small ribosomal subunit protein uS12c">
    <location>
        <begin position="1"/>
        <end position="38" status="greater than"/>
    </location>
</feature>
<feature type="region of interest" description="Disordered" evidence="2">
    <location>
        <begin position="1"/>
        <end position="26"/>
    </location>
</feature>
<feature type="non-terminal residue">
    <location>
        <position position="38"/>
    </location>
</feature>
<gene>
    <name type="primary">rps12</name>
</gene>
<keyword id="KW-0150">Chloroplast</keyword>
<keyword id="KW-0934">Plastid</keyword>
<keyword id="KW-0687">Ribonucleoprotein</keyword>
<keyword id="KW-0689">Ribosomal protein</keyword>
<keyword id="KW-0694">RNA-binding</keyword>
<keyword id="KW-0699">rRNA-binding</keyword>
<sequence>MPTIQQLIRNARQPIENRKKSPALRGCPQRRGVCARVY</sequence>
<proteinExistence type="inferred from homology"/>